<dbReference type="EMBL" id="CP001322">
    <property type="protein sequence ID" value="ACL04840.1"/>
    <property type="molecule type" value="Genomic_DNA"/>
</dbReference>
<dbReference type="RefSeq" id="WP_015947900.1">
    <property type="nucleotide sequence ID" value="NC_011768.1"/>
</dbReference>
<dbReference type="SMR" id="B8FBT7"/>
<dbReference type="KEGG" id="dal:Dalk_3150"/>
<dbReference type="eggNOG" id="COG0632">
    <property type="taxonomic scope" value="Bacteria"/>
</dbReference>
<dbReference type="HOGENOM" id="CLU_087936_3_0_7"/>
<dbReference type="Proteomes" id="UP000000739">
    <property type="component" value="Chromosome"/>
</dbReference>
<dbReference type="GO" id="GO:0005737">
    <property type="term" value="C:cytoplasm"/>
    <property type="evidence" value="ECO:0007669"/>
    <property type="project" value="UniProtKB-SubCell"/>
</dbReference>
<dbReference type="GO" id="GO:0048476">
    <property type="term" value="C:Holliday junction resolvase complex"/>
    <property type="evidence" value="ECO:0007669"/>
    <property type="project" value="UniProtKB-UniRule"/>
</dbReference>
<dbReference type="GO" id="GO:0005524">
    <property type="term" value="F:ATP binding"/>
    <property type="evidence" value="ECO:0007669"/>
    <property type="project" value="InterPro"/>
</dbReference>
<dbReference type="GO" id="GO:0000400">
    <property type="term" value="F:four-way junction DNA binding"/>
    <property type="evidence" value="ECO:0007669"/>
    <property type="project" value="UniProtKB-UniRule"/>
</dbReference>
<dbReference type="GO" id="GO:0009378">
    <property type="term" value="F:four-way junction helicase activity"/>
    <property type="evidence" value="ECO:0007669"/>
    <property type="project" value="InterPro"/>
</dbReference>
<dbReference type="GO" id="GO:0006310">
    <property type="term" value="P:DNA recombination"/>
    <property type="evidence" value="ECO:0007669"/>
    <property type="project" value="UniProtKB-UniRule"/>
</dbReference>
<dbReference type="GO" id="GO:0006281">
    <property type="term" value="P:DNA repair"/>
    <property type="evidence" value="ECO:0007669"/>
    <property type="project" value="UniProtKB-UniRule"/>
</dbReference>
<dbReference type="Gene3D" id="1.10.150.20">
    <property type="entry name" value="5' to 3' exonuclease, C-terminal subdomain"/>
    <property type="match status" value="1"/>
</dbReference>
<dbReference type="Gene3D" id="2.40.50.140">
    <property type="entry name" value="Nucleic acid-binding proteins"/>
    <property type="match status" value="1"/>
</dbReference>
<dbReference type="HAMAP" id="MF_00031">
    <property type="entry name" value="DNA_HJ_migration_RuvA"/>
    <property type="match status" value="1"/>
</dbReference>
<dbReference type="InterPro" id="IPR013849">
    <property type="entry name" value="DNA_helicase_Holl-junc_RuvA_I"/>
</dbReference>
<dbReference type="InterPro" id="IPR012340">
    <property type="entry name" value="NA-bd_OB-fold"/>
</dbReference>
<dbReference type="InterPro" id="IPR000085">
    <property type="entry name" value="RuvA"/>
</dbReference>
<dbReference type="InterPro" id="IPR010994">
    <property type="entry name" value="RuvA_2-like"/>
</dbReference>
<dbReference type="NCBIfam" id="TIGR00084">
    <property type="entry name" value="ruvA"/>
    <property type="match status" value="1"/>
</dbReference>
<dbReference type="Pfam" id="PF14520">
    <property type="entry name" value="HHH_5"/>
    <property type="match status" value="1"/>
</dbReference>
<dbReference type="Pfam" id="PF01330">
    <property type="entry name" value="RuvA_N"/>
    <property type="match status" value="1"/>
</dbReference>
<dbReference type="SUPFAM" id="SSF50249">
    <property type="entry name" value="Nucleic acid-binding proteins"/>
    <property type="match status" value="1"/>
</dbReference>
<dbReference type="SUPFAM" id="SSF47781">
    <property type="entry name" value="RuvA domain 2-like"/>
    <property type="match status" value="1"/>
</dbReference>
<organism>
    <name type="scientific">Desulfatibacillum aliphaticivorans</name>
    <dbReference type="NCBI Taxonomy" id="218208"/>
    <lineage>
        <taxon>Bacteria</taxon>
        <taxon>Pseudomonadati</taxon>
        <taxon>Thermodesulfobacteriota</taxon>
        <taxon>Desulfobacteria</taxon>
        <taxon>Desulfobacterales</taxon>
        <taxon>Desulfatibacillaceae</taxon>
        <taxon>Desulfatibacillum</taxon>
    </lineage>
</organism>
<keyword id="KW-0963">Cytoplasm</keyword>
<keyword id="KW-0227">DNA damage</keyword>
<keyword id="KW-0233">DNA recombination</keyword>
<keyword id="KW-0234">DNA repair</keyword>
<keyword id="KW-0238">DNA-binding</keyword>
<keyword id="KW-1185">Reference proteome</keyword>
<protein>
    <recommendedName>
        <fullName evidence="1">Holliday junction branch migration complex subunit RuvA</fullName>
    </recommendedName>
</protein>
<proteinExistence type="inferred from homology"/>
<reference key="1">
    <citation type="journal article" date="2012" name="Environ. Microbiol.">
        <title>The genome sequence of Desulfatibacillum alkenivorans AK-01: a blueprint for anaerobic alkane oxidation.</title>
        <authorList>
            <person name="Callaghan A.V."/>
            <person name="Morris B.E."/>
            <person name="Pereira I.A."/>
            <person name="McInerney M.J."/>
            <person name="Austin R.N."/>
            <person name="Groves J.T."/>
            <person name="Kukor J.J."/>
            <person name="Suflita J.M."/>
            <person name="Young L.Y."/>
            <person name="Zylstra G.J."/>
            <person name="Wawrik B."/>
        </authorList>
    </citation>
    <scope>NUCLEOTIDE SEQUENCE [LARGE SCALE GENOMIC DNA]</scope>
    <source>
        <strain>AK-01</strain>
    </source>
</reference>
<accession>B8FBT7</accession>
<gene>
    <name evidence="1" type="primary">ruvA</name>
    <name type="ordered locus">Dalk_3150</name>
</gene>
<evidence type="ECO:0000255" key="1">
    <source>
        <dbReference type="HAMAP-Rule" id="MF_00031"/>
    </source>
</evidence>
<comment type="function">
    <text evidence="1">The RuvA-RuvB-RuvC complex processes Holliday junction (HJ) DNA during genetic recombination and DNA repair, while the RuvA-RuvB complex plays an important role in the rescue of blocked DNA replication forks via replication fork reversal (RFR). RuvA specifically binds to HJ cruciform DNA, conferring on it an open structure. The RuvB hexamer acts as an ATP-dependent pump, pulling dsDNA into and through the RuvAB complex. HJ branch migration allows RuvC to scan DNA until it finds its consensus sequence, where it cleaves and resolves the cruciform DNA.</text>
</comment>
<comment type="subunit">
    <text evidence="1">Homotetramer. Forms an RuvA(8)-RuvB(12)-Holliday junction (HJ) complex. HJ DNA is sandwiched between 2 RuvA tetramers; dsDNA enters through RuvA and exits via RuvB. An RuvB hexamer assembles on each DNA strand where it exits the tetramer. Each RuvB hexamer is contacted by two RuvA subunits (via domain III) on 2 adjacent RuvB subunits; this complex drives branch migration. In the full resolvosome a probable DNA-RuvA(4)-RuvB(12)-RuvC(2) complex forms which resolves the HJ.</text>
</comment>
<comment type="subcellular location">
    <subcellularLocation>
        <location evidence="1">Cytoplasm</location>
    </subcellularLocation>
</comment>
<comment type="domain">
    <text evidence="1">Has three domains with a flexible linker between the domains II and III and assumes an 'L' shape. Domain III is highly mobile and contacts RuvB.</text>
</comment>
<comment type="similarity">
    <text evidence="1">Belongs to the RuvA family.</text>
</comment>
<name>RUVA_DESAL</name>
<feature type="chain" id="PRO_1000195134" description="Holliday junction branch migration complex subunit RuvA">
    <location>
        <begin position="1"/>
        <end position="204"/>
    </location>
</feature>
<feature type="region of interest" description="Domain I" evidence="1">
    <location>
        <begin position="1"/>
        <end position="67"/>
    </location>
</feature>
<feature type="region of interest" description="Domain II" evidence="1">
    <location>
        <begin position="68"/>
        <end position="145"/>
    </location>
</feature>
<feature type="region of interest" description="Flexible linker" evidence="1">
    <location>
        <begin position="146"/>
        <end position="156"/>
    </location>
</feature>
<feature type="region of interest" description="Domain III" evidence="1">
    <location>
        <begin position="156"/>
        <end position="204"/>
    </location>
</feature>
<sequence>MIGYLEGKILYRQGERIMILAGGVGYEVLLPSVVSASMTKGPGDETGLYIYFHQTEKQPKPVLIGFNSLEEREFFERFISVEAIGPIKAVSALCIPIGEIAAAIENKDSGALRKLKGIGARTADKIIATLRGKMAVFAGEHGGEPAGPAPVEENFHLLVLDVLVNQLGHKAAEAKELINQAIKRNPAISSPEELFDEVYRGETG</sequence>